<keyword id="KW-0150">Chloroplast</keyword>
<keyword id="KW-0472">Membrane</keyword>
<keyword id="KW-0934">Plastid</keyword>
<keyword id="KW-1185">Reference proteome</keyword>
<keyword id="KW-0793">Thylakoid</keyword>
<keyword id="KW-0812">Transmembrane</keyword>
<keyword id="KW-1133">Transmembrane helix</keyword>
<gene>
    <name evidence="1" type="primary">psbN</name>
</gene>
<sequence>METATIIVIFVSSLLLGITTYSVYTAFGPASKNLRDPFEEHED</sequence>
<evidence type="ECO:0000255" key="1">
    <source>
        <dbReference type="HAMAP-Rule" id="MF_00293"/>
    </source>
</evidence>
<dbReference type="EMBL" id="EF067920">
    <property type="protein sequence ID" value="ABK20608.1"/>
    <property type="molecule type" value="Genomic_DNA"/>
</dbReference>
<dbReference type="RefSeq" id="YP_874385.1">
    <property type="nucleotide sequence ID" value="NC_008588.1"/>
</dbReference>
<dbReference type="SMR" id="A0T0B0"/>
<dbReference type="STRING" id="556484.A0T0B0"/>
<dbReference type="GeneID" id="4524670"/>
<dbReference type="InParanoid" id="A0T0B0"/>
<dbReference type="Proteomes" id="UP000000759">
    <property type="component" value="Chloroplast"/>
</dbReference>
<dbReference type="GO" id="GO:0009535">
    <property type="term" value="C:chloroplast thylakoid membrane"/>
    <property type="evidence" value="ECO:0007669"/>
    <property type="project" value="UniProtKB-SubCell"/>
</dbReference>
<dbReference type="GO" id="GO:0015979">
    <property type="term" value="P:photosynthesis"/>
    <property type="evidence" value="ECO:0007669"/>
    <property type="project" value="InterPro"/>
</dbReference>
<dbReference type="HAMAP" id="MF_00293">
    <property type="entry name" value="PSII_PsbN"/>
    <property type="match status" value="1"/>
</dbReference>
<dbReference type="InterPro" id="IPR003398">
    <property type="entry name" value="PSII_PsbN"/>
</dbReference>
<dbReference type="PANTHER" id="PTHR35326">
    <property type="entry name" value="PROTEIN PSBN"/>
    <property type="match status" value="1"/>
</dbReference>
<dbReference type="PANTHER" id="PTHR35326:SF3">
    <property type="entry name" value="PROTEIN PSBN"/>
    <property type="match status" value="1"/>
</dbReference>
<dbReference type="Pfam" id="PF02468">
    <property type="entry name" value="PsbN"/>
    <property type="match status" value="1"/>
</dbReference>
<name>PSBN_PHATC</name>
<reference key="1">
    <citation type="journal article" date="2007" name="Mol. Genet. Genomics">
        <title>Chloroplast genomes of the diatoms Phaeodactylum tricornutum and Thalassiosira pseudonana: comparison with other plastid genomes of the red lineage.</title>
        <authorList>
            <person name="Oudot-Le Secq M.-P."/>
            <person name="Grimwood J."/>
            <person name="Shapiro H."/>
            <person name="Armbrust E.V."/>
            <person name="Bowler C."/>
            <person name="Green B.R."/>
        </authorList>
    </citation>
    <scope>NUCLEOTIDE SEQUENCE [LARGE SCALE GENOMIC DNA]</scope>
    <source>
        <strain>CCAP 1055/1</strain>
    </source>
</reference>
<organism>
    <name type="scientific">Phaeodactylum tricornutum (strain CCAP 1055/1)</name>
    <dbReference type="NCBI Taxonomy" id="556484"/>
    <lineage>
        <taxon>Eukaryota</taxon>
        <taxon>Sar</taxon>
        <taxon>Stramenopiles</taxon>
        <taxon>Ochrophyta</taxon>
        <taxon>Bacillariophyta</taxon>
        <taxon>Bacillariophyceae</taxon>
        <taxon>Bacillariophycidae</taxon>
        <taxon>Naviculales</taxon>
        <taxon>Phaeodactylaceae</taxon>
        <taxon>Phaeodactylum</taxon>
    </lineage>
</organism>
<protein>
    <recommendedName>
        <fullName evidence="1">Protein PsbN</fullName>
    </recommendedName>
</protein>
<feature type="chain" id="PRO_0000276285" description="Protein PsbN">
    <location>
        <begin position="1"/>
        <end position="43"/>
    </location>
</feature>
<feature type="transmembrane region" description="Helical" evidence="1">
    <location>
        <begin position="7"/>
        <end position="29"/>
    </location>
</feature>
<geneLocation type="chloroplast"/>
<accession>A0T0B0</accession>
<proteinExistence type="inferred from homology"/>
<comment type="function">
    <text evidence="1">May play a role in photosystem I and II biogenesis.</text>
</comment>
<comment type="subcellular location">
    <subcellularLocation>
        <location evidence="1">Plastid</location>
        <location evidence="1">Chloroplast thylakoid membrane</location>
        <topology evidence="1">Single-pass membrane protein</topology>
    </subcellularLocation>
</comment>
<comment type="similarity">
    <text evidence="1">Belongs to the PsbN family.</text>
</comment>
<comment type="caution">
    <text evidence="1">Originally thought to be a component of PSII; based on experiments in Synechocystis, N.tabacum and barley, and its absence from PSII in T.elongatus and T.vulcanus, this is probably not true.</text>
</comment>